<protein>
    <recommendedName>
        <fullName evidence="1">Phosphoglycerate kinase</fullName>
        <ecNumber evidence="1">2.7.2.3</ecNumber>
    </recommendedName>
</protein>
<proteinExistence type="inferred from homology"/>
<reference key="1">
    <citation type="journal article" date="2007" name="J. Bacteriol.">
        <title>The complete genome sequence of Roseobacter denitrificans reveals a mixotrophic rather than photosynthetic metabolism.</title>
        <authorList>
            <person name="Swingley W.D."/>
            <person name="Sadekar S."/>
            <person name="Mastrian S.D."/>
            <person name="Matthies H.J."/>
            <person name="Hao J."/>
            <person name="Ramos H."/>
            <person name="Acharya C.R."/>
            <person name="Conrad A.L."/>
            <person name="Taylor H.L."/>
            <person name="Dejesa L.C."/>
            <person name="Shah M.K."/>
            <person name="O'Huallachain M.E."/>
            <person name="Lince M.T."/>
            <person name="Blankenship R.E."/>
            <person name="Beatty J.T."/>
            <person name="Touchman J.W."/>
        </authorList>
    </citation>
    <scope>NUCLEOTIDE SEQUENCE [LARGE SCALE GENOMIC DNA]</scope>
    <source>
        <strain>ATCC 33942 / OCh 114</strain>
    </source>
</reference>
<sequence length="395" mass="41343">MSWKTLDDMDVAGKRVLLRVDINVPVEEGQVTDRTRIDRIIPTLQDILAKGGTPIMLAHFGRPKGKVVPEMSLRVTLPALEAALGRKVTFIEEPNAERLSDLPEGIVVLLENTRFAVGEEANDPEMARFLATLGDVFCNDAFSAAHRAHASTTGVAHLLPSCAGRLMQAELSALEAALSTPQRPVGAVVGGAKVSTKIALLENLVARLDVLVIGGGMANTFLAAQGAKLGASLMEPDYMETARTIMQSAERAGCKLLLPVDGVVAREFKAGADFEVVALGKDTVLAEDQMVLDAGPQSVAAVMAAFRTLKTLIWNGPLGAFEITPFNQATNATALEAARLTKSGALISVAGGGDTVAALNQAGAAADFTYISTAGGAFLEWMEGKTLPGVAALQG</sequence>
<name>PGK_ROSDO</name>
<dbReference type="EC" id="2.7.2.3" evidence="1"/>
<dbReference type="EMBL" id="CP000362">
    <property type="protein sequence ID" value="ABG32526.1"/>
    <property type="molecule type" value="Genomic_DNA"/>
</dbReference>
<dbReference type="RefSeq" id="WP_011569142.1">
    <property type="nucleotide sequence ID" value="NC_008209.1"/>
</dbReference>
<dbReference type="SMR" id="Q164R7"/>
<dbReference type="STRING" id="375451.RD1_3008"/>
<dbReference type="KEGG" id="rde:RD1_3008"/>
<dbReference type="eggNOG" id="COG0126">
    <property type="taxonomic scope" value="Bacteria"/>
</dbReference>
<dbReference type="HOGENOM" id="CLU_025427_0_2_5"/>
<dbReference type="OrthoDB" id="9808460at2"/>
<dbReference type="UniPathway" id="UPA00109">
    <property type="reaction ID" value="UER00185"/>
</dbReference>
<dbReference type="Proteomes" id="UP000007029">
    <property type="component" value="Chromosome"/>
</dbReference>
<dbReference type="GO" id="GO:0005829">
    <property type="term" value="C:cytosol"/>
    <property type="evidence" value="ECO:0007669"/>
    <property type="project" value="TreeGrafter"/>
</dbReference>
<dbReference type="GO" id="GO:0043531">
    <property type="term" value="F:ADP binding"/>
    <property type="evidence" value="ECO:0007669"/>
    <property type="project" value="TreeGrafter"/>
</dbReference>
<dbReference type="GO" id="GO:0005524">
    <property type="term" value="F:ATP binding"/>
    <property type="evidence" value="ECO:0007669"/>
    <property type="project" value="UniProtKB-KW"/>
</dbReference>
<dbReference type="GO" id="GO:0004618">
    <property type="term" value="F:phosphoglycerate kinase activity"/>
    <property type="evidence" value="ECO:0007669"/>
    <property type="project" value="UniProtKB-UniRule"/>
</dbReference>
<dbReference type="GO" id="GO:0006094">
    <property type="term" value="P:gluconeogenesis"/>
    <property type="evidence" value="ECO:0007669"/>
    <property type="project" value="TreeGrafter"/>
</dbReference>
<dbReference type="GO" id="GO:0006096">
    <property type="term" value="P:glycolytic process"/>
    <property type="evidence" value="ECO:0007669"/>
    <property type="project" value="UniProtKB-UniRule"/>
</dbReference>
<dbReference type="FunFam" id="3.40.50.1260:FF:000006">
    <property type="entry name" value="Phosphoglycerate kinase"/>
    <property type="match status" value="1"/>
</dbReference>
<dbReference type="FunFam" id="3.40.50.1260:FF:000031">
    <property type="entry name" value="Phosphoglycerate kinase 1"/>
    <property type="match status" value="1"/>
</dbReference>
<dbReference type="Gene3D" id="3.40.50.1260">
    <property type="entry name" value="Phosphoglycerate kinase, N-terminal domain"/>
    <property type="match status" value="2"/>
</dbReference>
<dbReference type="HAMAP" id="MF_00145">
    <property type="entry name" value="Phosphoglyc_kinase"/>
    <property type="match status" value="1"/>
</dbReference>
<dbReference type="InterPro" id="IPR001576">
    <property type="entry name" value="Phosphoglycerate_kinase"/>
</dbReference>
<dbReference type="InterPro" id="IPR015911">
    <property type="entry name" value="Phosphoglycerate_kinase_CS"/>
</dbReference>
<dbReference type="InterPro" id="IPR015824">
    <property type="entry name" value="Phosphoglycerate_kinase_N"/>
</dbReference>
<dbReference type="InterPro" id="IPR036043">
    <property type="entry name" value="Phosphoglycerate_kinase_sf"/>
</dbReference>
<dbReference type="PANTHER" id="PTHR11406">
    <property type="entry name" value="PHOSPHOGLYCERATE KINASE"/>
    <property type="match status" value="1"/>
</dbReference>
<dbReference type="PANTHER" id="PTHR11406:SF23">
    <property type="entry name" value="PHOSPHOGLYCERATE KINASE 1, CHLOROPLASTIC-RELATED"/>
    <property type="match status" value="1"/>
</dbReference>
<dbReference type="Pfam" id="PF00162">
    <property type="entry name" value="PGK"/>
    <property type="match status" value="1"/>
</dbReference>
<dbReference type="PIRSF" id="PIRSF000724">
    <property type="entry name" value="Pgk"/>
    <property type="match status" value="1"/>
</dbReference>
<dbReference type="PRINTS" id="PR00477">
    <property type="entry name" value="PHGLYCKINASE"/>
</dbReference>
<dbReference type="SUPFAM" id="SSF53748">
    <property type="entry name" value="Phosphoglycerate kinase"/>
    <property type="match status" value="1"/>
</dbReference>
<dbReference type="PROSITE" id="PS00111">
    <property type="entry name" value="PGLYCERATE_KINASE"/>
    <property type="match status" value="1"/>
</dbReference>
<gene>
    <name evidence="1" type="primary">pgk</name>
    <name type="ordered locus">RD1_3008</name>
</gene>
<evidence type="ECO:0000255" key="1">
    <source>
        <dbReference type="HAMAP-Rule" id="MF_00145"/>
    </source>
</evidence>
<accession>Q164R7</accession>
<feature type="chain" id="PRO_1000058048" description="Phosphoglycerate kinase">
    <location>
        <begin position="1"/>
        <end position="395"/>
    </location>
</feature>
<feature type="binding site" evidence="1">
    <location>
        <begin position="21"/>
        <end position="23"/>
    </location>
    <ligand>
        <name>substrate</name>
    </ligand>
</feature>
<feature type="binding site" evidence="1">
    <location>
        <position position="36"/>
    </location>
    <ligand>
        <name>substrate</name>
    </ligand>
</feature>
<feature type="binding site" evidence="1">
    <location>
        <begin position="59"/>
        <end position="62"/>
    </location>
    <ligand>
        <name>substrate</name>
    </ligand>
</feature>
<feature type="binding site" evidence="1">
    <location>
        <position position="114"/>
    </location>
    <ligand>
        <name>substrate</name>
    </ligand>
</feature>
<feature type="binding site" evidence="1">
    <location>
        <position position="147"/>
    </location>
    <ligand>
        <name>substrate</name>
    </ligand>
</feature>
<feature type="binding site" evidence="1">
    <location>
        <position position="197"/>
    </location>
    <ligand>
        <name>ATP</name>
        <dbReference type="ChEBI" id="CHEBI:30616"/>
    </ligand>
</feature>
<feature type="binding site" evidence="1">
    <location>
        <position position="322"/>
    </location>
    <ligand>
        <name>ATP</name>
        <dbReference type="ChEBI" id="CHEBI:30616"/>
    </ligand>
</feature>
<feature type="binding site" evidence="1">
    <location>
        <begin position="352"/>
        <end position="355"/>
    </location>
    <ligand>
        <name>ATP</name>
        <dbReference type="ChEBI" id="CHEBI:30616"/>
    </ligand>
</feature>
<keyword id="KW-0067">ATP-binding</keyword>
<keyword id="KW-0963">Cytoplasm</keyword>
<keyword id="KW-0324">Glycolysis</keyword>
<keyword id="KW-0418">Kinase</keyword>
<keyword id="KW-0547">Nucleotide-binding</keyword>
<keyword id="KW-1185">Reference proteome</keyword>
<keyword id="KW-0808">Transferase</keyword>
<comment type="catalytic activity">
    <reaction evidence="1">
        <text>(2R)-3-phosphoglycerate + ATP = (2R)-3-phospho-glyceroyl phosphate + ADP</text>
        <dbReference type="Rhea" id="RHEA:14801"/>
        <dbReference type="ChEBI" id="CHEBI:30616"/>
        <dbReference type="ChEBI" id="CHEBI:57604"/>
        <dbReference type="ChEBI" id="CHEBI:58272"/>
        <dbReference type="ChEBI" id="CHEBI:456216"/>
        <dbReference type="EC" id="2.7.2.3"/>
    </reaction>
</comment>
<comment type="pathway">
    <text evidence="1">Carbohydrate degradation; glycolysis; pyruvate from D-glyceraldehyde 3-phosphate: step 2/5.</text>
</comment>
<comment type="subunit">
    <text evidence="1">Monomer.</text>
</comment>
<comment type="subcellular location">
    <subcellularLocation>
        <location evidence="1">Cytoplasm</location>
    </subcellularLocation>
</comment>
<comment type="similarity">
    <text evidence="1">Belongs to the phosphoglycerate kinase family.</text>
</comment>
<organism>
    <name type="scientific">Roseobacter denitrificans (strain ATCC 33942 / OCh 114)</name>
    <name type="common">Erythrobacter sp. (strain OCh 114)</name>
    <name type="synonym">Roseobacter denitrificans</name>
    <dbReference type="NCBI Taxonomy" id="375451"/>
    <lineage>
        <taxon>Bacteria</taxon>
        <taxon>Pseudomonadati</taxon>
        <taxon>Pseudomonadota</taxon>
        <taxon>Alphaproteobacteria</taxon>
        <taxon>Rhodobacterales</taxon>
        <taxon>Roseobacteraceae</taxon>
        <taxon>Roseobacter</taxon>
    </lineage>
</organism>